<gene>
    <name type="primary">TAF1</name>
    <name type="synonym">GTD1</name>
    <name type="synonym">HAC13</name>
    <name type="synonym">HAF1</name>
    <name type="synonym">TAF1A</name>
    <name type="ordered locus">At1g32750</name>
    <name type="ORF">F6N18.13</name>
</gene>
<comment type="function">
    <text evidence="1">TAFs are components of the transcription factor IID (TFIID) complex that is essential for mediating regulation of RNA polymerase transcription. Core scaffold of the TFIID complex (By similarity).</text>
</comment>
<comment type="subunit">
    <text evidence="7">Component of the TFIID complex. TFIID is composed of TATA binding protein (TBP) and a number of TBP-associated factors (TAFs) whose MWs range from 14-217 kDa. Interacts with TAF7 and TAF14B, and (via N-terminus) with TBP1 and TBP2.</text>
</comment>
<comment type="subcellular location">
    <subcellularLocation>
        <location evidence="8">Nucleus</location>
    </subcellularLocation>
</comment>
<comment type="tissue specificity">
    <text evidence="6">Expressed in roots, leaves and inflorescences.</text>
</comment>
<comment type="similarity">
    <text evidence="8">Belongs to the TAF1 family.</text>
</comment>
<comment type="sequence caution" evidence="8">
    <conflict type="erroneous gene model prediction">
        <sequence resource="EMBL-CDS" id="AAF25977"/>
    </conflict>
</comment>
<accession>Q8LRK9</accession>
<accession>Q9LPI9</accession>
<protein>
    <recommendedName>
        <fullName>Transcription initiation factor TFIID subunit 1</fullName>
    </recommendedName>
    <alternativeName>
        <fullName>TAFII250-A</fullName>
    </alternativeName>
    <alternativeName>
        <fullName>TBP-associated factor 1</fullName>
        <shortName>AtTAF1</shortName>
    </alternativeName>
    <alternativeName>
        <fullName>Transcription initiation factor TFIID subunit 1-A</fullName>
    </alternativeName>
</protein>
<sequence>MAESNGKGSHNETSSDDDDEYEDNSRGFNLGFIFGNVDNSGDLDADYLDEDAKEHLSALADKLGSSLPDINLLAKSERTASDPAEQDYDRKAEDAVDYEDIDEEYDGPEVQVVSEEDHLLPKKEYFSTAVALGSLKSRASVFDDEDYDEEEEQEEEQAPVEKSLETEKREPVVLKEDKALEYEEEASILDKEDHMDTEDVQEEEVDELLEGTLDDKGATPLPTLYVEDGMVILQFSEIFAIHEPPQKRDRRENRYVTCRDKYKSMDISELVEDDEEVLLKSHGRIDTHVEQADLIQLDVPFPIREGLQLVKASTIGGITPESREFTKLGRDSCIMGELLKQDFIDDNSSLCQSQLSMQVFPLDQHEWERRIIWEHSPEISGNSGEIFEPGLEPEGMLVKGTNSETEQESLNVVNSRVQVQADNNMFVPFSANLLESFGSRGSQSTNESTNKSRHHPQLLRLESQWDENHLSGNDEAGVKKIKRLEKDALGRFSRLVLRERDLGDEAWLDSIIWDSEKELSRSKLIFDLQDEQMVFEIFDNEESKNLQLHAGAMIVSRSSKSKDETFQEGCESNSGWQFNLSNDKFYMNGKSSQQLQANTNKSSVHSLRVFHSVPAIKLQTMKSKLSNKDIANFHRPKALWYPHDNELAIKQQGKLPTRGSMKIIVKSLGGKGSKLHVGIEESVSSLRAKASRKLDFKETEAVKMFYKGKELDDEKSLAAQNVQPNSLVHLIRTKVHLWPWAQKLPGENKSLRPPGAFKKKSDLSTKDGHVFLMEYCEERPLMLSNAGMGANLCTYYQKSSPEDQRGNLLRNQSDTLGNVMILEPGDKSPFLGEIHAGCSQSSVETNMYKAPIFPQRLQSTDYLLVRSPKGKLSLRRIDKIVVVGQQEPRMEVMSPGSKNLQTYLVNRMLVYVYREFFKRGGGEHPIAADELSFLFSNLTDAIIKKNMKIIACWKRDKNGQSYWTKKDSLLEPPESELKKLVAPEHVCSYESMLAGLYRLKHLGITRFTLPASISNALAQLPDEAIALAAASHIERELQITPWNLSSNFVACTNQDRANIERLEITGVGDPSGRGLGFSYVRAAPKAPAAAGHMKKKAAAGRGAPTVTGTDADLRRLSMEAAREVLIKFNVPDEIIAKQTRWHRIAMIRKLSSEQAASGVKVDPTTIGKYARGQRMSFLQMQQQAREKCQEIWDRQLLSLSAFDGDENESENEANSDLDSFAGDLENLLDAEEGGEGEESNISKNDKLDGVKGLKMRRRPSQVETDEEIEDEATEYAELCRLLMQDEDQKKKKKKMKGVGEGMGSYPPPRPNIALQSGEPVRKANAMDKKPIAIQPDASFLVNESTIKDNRNVDSIIKTPKGKQVKENSNSLGQLKKVKILNENLKVFKEKKSARENFVCGACGQHGHMRTNKHCPRYRENTESQPEGIDMDKSAGKPSSSEPSGLPKLKPIKNSKAAPKSAMKTSVDEALKGDKLSSKTGGLPLKFRYGIPAGDLSDKPVSEAPGSSEQAVVSDIDTGIKSTSKISKLKISSKAKPKESKGESERRSHSLMPTFSRERGESESHKPSVSGQPLSSTERNQAASSRHTISIPRPSLSMDTDQAESRRPHLVIRPPTEREQPQKKLVIKRSKEMNDHDMSSLEESPRFESRKTKRMAELAGFQRQQSFRLSENSLERRPKEDRVWWEEEEISTGRHREVRARRDYDDMSVSEEPNEIAEIRRYEEVIRSEREEEERQKAKKKKKKKKLQPEIVEGYLEDYPPRKNDRRLSERGRNVRSRYVSDFERDGAEYAPQPKRRKKGEVGLANILERIVDTLRLKEEVSRLFLKPVSKKEAPDYLDIVENPMDLSTIRDKVRKIEYRNREQFRHDVWQIKYNAHLYNDGRNPGIPPLADQLLEICDYLLDDYEDQLKEAEKGIDPND</sequence>
<proteinExistence type="evidence at protein level"/>
<evidence type="ECO:0000250" key="1"/>
<evidence type="ECO:0000255" key="2"/>
<evidence type="ECO:0000255" key="3">
    <source>
        <dbReference type="PROSITE-ProRule" id="PRU00035"/>
    </source>
</evidence>
<evidence type="ECO:0000255" key="4">
    <source>
        <dbReference type="PROSITE-ProRule" id="PRU00214"/>
    </source>
</evidence>
<evidence type="ECO:0000256" key="5">
    <source>
        <dbReference type="SAM" id="MobiDB-lite"/>
    </source>
</evidence>
<evidence type="ECO:0000269" key="6">
    <source>
    </source>
</evidence>
<evidence type="ECO:0000269" key="7">
    <source>
    </source>
</evidence>
<evidence type="ECO:0000305" key="8"/>
<feature type="chain" id="PRO_0000269753" description="Transcription initiation factor TFIID subunit 1">
    <location>
        <begin position="1"/>
        <end position="1919"/>
    </location>
</feature>
<feature type="domain" description="Ubiquitin-like" evidence="4">
    <location>
        <begin position="661"/>
        <end position="737"/>
    </location>
</feature>
<feature type="domain" description="Bromo" evidence="3">
    <location>
        <begin position="1794"/>
        <end position="1911"/>
    </location>
</feature>
<feature type="region of interest" description="Disordered" evidence="5">
    <location>
        <begin position="1"/>
        <end position="25"/>
    </location>
</feature>
<feature type="region of interest" description="Disordered" evidence="5">
    <location>
        <begin position="143"/>
        <end position="169"/>
    </location>
</feature>
<feature type="region of interest" description="Disordered" evidence="5">
    <location>
        <begin position="1287"/>
        <end position="1314"/>
    </location>
</feature>
<feature type="region of interest" description="Disordered" evidence="5">
    <location>
        <begin position="1408"/>
        <end position="1679"/>
    </location>
</feature>
<feature type="region of interest" description="Disordered" evidence="5">
    <location>
        <begin position="1726"/>
        <end position="1746"/>
    </location>
</feature>
<feature type="coiled-coil region" evidence="2">
    <location>
        <begin position="1713"/>
        <end position="1750"/>
    </location>
</feature>
<feature type="compositionally biased region" description="Acidic residues" evidence="5">
    <location>
        <begin position="143"/>
        <end position="158"/>
    </location>
</feature>
<feature type="compositionally biased region" description="Basic and acidic residues" evidence="5">
    <location>
        <begin position="1465"/>
        <end position="1476"/>
    </location>
</feature>
<feature type="compositionally biased region" description="Basic and acidic residues" evidence="5">
    <location>
        <begin position="1535"/>
        <end position="1547"/>
    </location>
</feature>
<feature type="compositionally biased region" description="Basic and acidic residues" evidence="5">
    <location>
        <begin position="1555"/>
        <end position="1565"/>
    </location>
</feature>
<feature type="compositionally biased region" description="Polar residues" evidence="5">
    <location>
        <begin position="1566"/>
        <end position="1587"/>
    </location>
</feature>
<feature type="compositionally biased region" description="Basic and acidic residues" evidence="5">
    <location>
        <begin position="1628"/>
        <end position="1655"/>
    </location>
</feature>
<feature type="compositionally biased region" description="Polar residues" evidence="5">
    <location>
        <begin position="1661"/>
        <end position="1671"/>
    </location>
</feature>
<feature type="compositionally biased region" description="Basic and acidic residues" evidence="5">
    <location>
        <begin position="1726"/>
        <end position="1735"/>
    </location>
</feature>
<feature type="compositionally biased region" description="Basic residues" evidence="5">
    <location>
        <begin position="1736"/>
        <end position="1745"/>
    </location>
</feature>
<name>TAF1_ARATH</name>
<dbReference type="EMBL" id="AF510669">
    <property type="protein sequence ID" value="AAM34782.1"/>
    <property type="molecule type" value="mRNA"/>
</dbReference>
<dbReference type="EMBL" id="AC017118">
    <property type="protein sequence ID" value="AAF25977.1"/>
    <property type="status" value="ALT_SEQ"/>
    <property type="molecule type" value="Genomic_DNA"/>
</dbReference>
<dbReference type="EMBL" id="CP002684">
    <property type="protein sequence ID" value="AEE31524.1"/>
    <property type="molecule type" value="Genomic_DNA"/>
</dbReference>
<dbReference type="PIR" id="D86452">
    <property type="entry name" value="D86452"/>
</dbReference>
<dbReference type="RefSeq" id="NP_174552.1">
    <property type="nucleotide sequence ID" value="NM_103009.4"/>
</dbReference>
<dbReference type="SMR" id="Q8LRK9"/>
<dbReference type="BioGRID" id="25403">
    <property type="interactions" value="10"/>
</dbReference>
<dbReference type="FunCoup" id="Q8LRK9">
    <property type="interactions" value="3427"/>
</dbReference>
<dbReference type="IntAct" id="Q8LRK9">
    <property type="interactions" value="10"/>
</dbReference>
<dbReference type="STRING" id="3702.Q8LRK9"/>
<dbReference type="iPTMnet" id="Q8LRK9"/>
<dbReference type="PaxDb" id="3702-AT1G32750.1"/>
<dbReference type="ProteomicsDB" id="245284"/>
<dbReference type="EnsemblPlants" id="AT1G32750.1">
    <property type="protein sequence ID" value="AT1G32750.1"/>
    <property type="gene ID" value="AT1G32750"/>
</dbReference>
<dbReference type="GeneID" id="840169"/>
<dbReference type="Gramene" id="AT1G32750.1">
    <property type="protein sequence ID" value="AT1G32750.1"/>
    <property type="gene ID" value="AT1G32750"/>
</dbReference>
<dbReference type="KEGG" id="ath:AT1G32750"/>
<dbReference type="Araport" id="AT1G32750"/>
<dbReference type="TAIR" id="AT1G32750">
    <property type="gene designation" value="HAF01"/>
</dbReference>
<dbReference type="eggNOG" id="KOG0008">
    <property type="taxonomic scope" value="Eukaryota"/>
</dbReference>
<dbReference type="HOGENOM" id="CLU_236945_0_0_1"/>
<dbReference type="InParanoid" id="Q8LRK9"/>
<dbReference type="OMA" id="RTEIHLW"/>
<dbReference type="PhylomeDB" id="Q8LRK9"/>
<dbReference type="PRO" id="PR:Q8LRK9"/>
<dbReference type="Proteomes" id="UP000006548">
    <property type="component" value="Chromosome 1"/>
</dbReference>
<dbReference type="ExpressionAtlas" id="Q8LRK9">
    <property type="expression patterns" value="baseline and differential"/>
</dbReference>
<dbReference type="GO" id="GO:0005669">
    <property type="term" value="C:transcription factor TFIID complex"/>
    <property type="evidence" value="ECO:0007669"/>
    <property type="project" value="InterPro"/>
</dbReference>
<dbReference type="GO" id="GO:0004402">
    <property type="term" value="F:histone acetyltransferase activity"/>
    <property type="evidence" value="ECO:0007669"/>
    <property type="project" value="InterPro"/>
</dbReference>
<dbReference type="GO" id="GO:0016251">
    <property type="term" value="F:RNA polymerase II general transcription initiation factor activity"/>
    <property type="evidence" value="ECO:0007669"/>
    <property type="project" value="InterPro"/>
</dbReference>
<dbReference type="GO" id="GO:0017025">
    <property type="term" value="F:TBP-class protein binding"/>
    <property type="evidence" value="ECO:0007669"/>
    <property type="project" value="InterPro"/>
</dbReference>
<dbReference type="GO" id="GO:0009294">
    <property type="term" value="P:DNA-mediated transformation"/>
    <property type="evidence" value="ECO:0000315"/>
    <property type="project" value="TAIR"/>
</dbReference>
<dbReference type="CDD" id="cd04369">
    <property type="entry name" value="Bromodomain"/>
    <property type="match status" value="1"/>
</dbReference>
<dbReference type="CDD" id="cd17064">
    <property type="entry name" value="Ubl_TAFs_like"/>
    <property type="match status" value="1"/>
</dbReference>
<dbReference type="FunFam" id="1.20.920.10:FF:000043">
    <property type="entry name" value="Transcription initiation factor TFIID subunit 1"/>
    <property type="match status" value="1"/>
</dbReference>
<dbReference type="FunFam" id="3.10.20.90:FF:000223">
    <property type="entry name" value="Transcription initiation factor TFIID subunit 1"/>
    <property type="match status" value="1"/>
</dbReference>
<dbReference type="Gene3D" id="1.20.920.10">
    <property type="entry name" value="Bromodomain-like"/>
    <property type="match status" value="1"/>
</dbReference>
<dbReference type="Gene3D" id="3.10.20.90">
    <property type="entry name" value="Phosphatidylinositol 3-kinase Catalytic Subunit, Chain A, domain 1"/>
    <property type="match status" value="1"/>
</dbReference>
<dbReference type="Gene3D" id="1.10.1100.10">
    <property type="entry name" value="TAFII-230 TBP-binding domain"/>
    <property type="match status" value="1"/>
</dbReference>
<dbReference type="InterPro" id="IPR001487">
    <property type="entry name" value="Bromodomain"/>
</dbReference>
<dbReference type="InterPro" id="IPR036427">
    <property type="entry name" value="Bromodomain-like_sf"/>
</dbReference>
<dbReference type="InterPro" id="IPR018359">
    <property type="entry name" value="Bromodomain_CS"/>
</dbReference>
<dbReference type="InterPro" id="IPR040240">
    <property type="entry name" value="TAF1"/>
</dbReference>
<dbReference type="InterPro" id="IPR022591">
    <property type="entry name" value="TAF1_HAT_dom"/>
</dbReference>
<dbReference type="InterPro" id="IPR009067">
    <property type="entry name" value="TAF_II_230-bd"/>
</dbReference>
<dbReference type="InterPro" id="IPR036741">
    <property type="entry name" value="TAFII-230_TBP-bd_sf"/>
</dbReference>
<dbReference type="InterPro" id="IPR000626">
    <property type="entry name" value="Ubiquitin-like_dom"/>
</dbReference>
<dbReference type="InterPro" id="IPR029071">
    <property type="entry name" value="Ubiquitin-like_domsf"/>
</dbReference>
<dbReference type="PANTHER" id="PTHR13900">
    <property type="entry name" value="TRANSCRIPTION INITIATION FACTOR TFIID"/>
    <property type="match status" value="1"/>
</dbReference>
<dbReference type="PANTHER" id="PTHR13900:SF0">
    <property type="entry name" value="TRANSCRIPTION INITIATION FACTOR TFIID SUBUNIT 1"/>
    <property type="match status" value="1"/>
</dbReference>
<dbReference type="Pfam" id="PF00439">
    <property type="entry name" value="Bromodomain"/>
    <property type="match status" value="1"/>
</dbReference>
<dbReference type="Pfam" id="PF12157">
    <property type="entry name" value="DUF3591"/>
    <property type="match status" value="1"/>
</dbReference>
<dbReference type="Pfam" id="PF09247">
    <property type="entry name" value="TBP-binding"/>
    <property type="match status" value="1"/>
</dbReference>
<dbReference type="Pfam" id="PF00240">
    <property type="entry name" value="ubiquitin"/>
    <property type="match status" value="1"/>
</dbReference>
<dbReference type="PRINTS" id="PR00503">
    <property type="entry name" value="BROMODOMAIN"/>
</dbReference>
<dbReference type="SMART" id="SM00297">
    <property type="entry name" value="BROMO"/>
    <property type="match status" value="1"/>
</dbReference>
<dbReference type="SMART" id="SM00213">
    <property type="entry name" value="UBQ"/>
    <property type="match status" value="1"/>
</dbReference>
<dbReference type="SUPFAM" id="SSF47370">
    <property type="entry name" value="Bromodomain"/>
    <property type="match status" value="1"/>
</dbReference>
<dbReference type="SUPFAM" id="SSF47055">
    <property type="entry name" value="TAF(II)230 TBP-binding fragment"/>
    <property type="match status" value="1"/>
</dbReference>
<dbReference type="SUPFAM" id="SSF54236">
    <property type="entry name" value="Ubiquitin-like"/>
    <property type="match status" value="1"/>
</dbReference>
<dbReference type="PROSITE" id="PS00633">
    <property type="entry name" value="BROMODOMAIN_1"/>
    <property type="match status" value="1"/>
</dbReference>
<dbReference type="PROSITE" id="PS50014">
    <property type="entry name" value="BROMODOMAIN_2"/>
    <property type="match status" value="1"/>
</dbReference>
<dbReference type="PROSITE" id="PS50053">
    <property type="entry name" value="UBIQUITIN_2"/>
    <property type="match status" value="1"/>
</dbReference>
<reference key="1">
    <citation type="journal article" date="2002" name="Nucleic Acids Res.">
        <title>Analysis of histone acetyltransferase and histone deacetylase families of Arabidopsis thaliana suggests functional diversification of chromatin modification among multicellular eukaryotes.</title>
        <authorList>
            <person name="Pandey R."/>
            <person name="Mueller A."/>
            <person name="Napoli C.A."/>
            <person name="Selinger D.A."/>
            <person name="Pikaard C.S."/>
            <person name="Richards E.J."/>
            <person name="Bender J."/>
            <person name="Mount D.W."/>
            <person name="Jorgensen R.A."/>
        </authorList>
    </citation>
    <scope>NUCLEOTIDE SEQUENCE [MRNA]</scope>
    <scope>NOMENCLATURE</scope>
</reference>
<reference key="2">
    <citation type="journal article" date="2004" name="Gene">
        <title>TBP-associated factors in Arabidopsis.</title>
        <authorList>
            <person name="Lago C."/>
            <person name="Clerici E."/>
            <person name="Mizzi L."/>
            <person name="Colombo L."/>
            <person name="Kater M.M."/>
        </authorList>
    </citation>
    <scope>NUCLEOTIDE SEQUENCE [MRNA]</scope>
    <scope>IDENTIFICATION</scope>
    <scope>NOMENCLATURE</scope>
    <scope>TISSUE SPECIFICITY</scope>
</reference>
<reference key="3">
    <citation type="journal article" date="2000" name="Nature">
        <title>Sequence and analysis of chromosome 1 of the plant Arabidopsis thaliana.</title>
        <authorList>
            <person name="Theologis A."/>
            <person name="Ecker J.R."/>
            <person name="Palm C.J."/>
            <person name="Federspiel N.A."/>
            <person name="Kaul S."/>
            <person name="White O."/>
            <person name="Alonso J."/>
            <person name="Altafi H."/>
            <person name="Araujo R."/>
            <person name="Bowman C.L."/>
            <person name="Brooks S.Y."/>
            <person name="Buehler E."/>
            <person name="Chan A."/>
            <person name="Chao Q."/>
            <person name="Chen H."/>
            <person name="Cheuk R.F."/>
            <person name="Chin C.W."/>
            <person name="Chung M.K."/>
            <person name="Conn L."/>
            <person name="Conway A.B."/>
            <person name="Conway A.R."/>
            <person name="Creasy T.H."/>
            <person name="Dewar K."/>
            <person name="Dunn P."/>
            <person name="Etgu P."/>
            <person name="Feldblyum T.V."/>
            <person name="Feng J.-D."/>
            <person name="Fong B."/>
            <person name="Fujii C.Y."/>
            <person name="Gill J.E."/>
            <person name="Goldsmith A.D."/>
            <person name="Haas B."/>
            <person name="Hansen N.F."/>
            <person name="Hughes B."/>
            <person name="Huizar L."/>
            <person name="Hunter J.L."/>
            <person name="Jenkins J."/>
            <person name="Johnson-Hopson C."/>
            <person name="Khan S."/>
            <person name="Khaykin E."/>
            <person name="Kim C.J."/>
            <person name="Koo H.L."/>
            <person name="Kremenetskaia I."/>
            <person name="Kurtz D.B."/>
            <person name="Kwan A."/>
            <person name="Lam B."/>
            <person name="Langin-Hooper S."/>
            <person name="Lee A."/>
            <person name="Lee J.M."/>
            <person name="Lenz C.A."/>
            <person name="Li J.H."/>
            <person name="Li Y.-P."/>
            <person name="Lin X."/>
            <person name="Liu S.X."/>
            <person name="Liu Z.A."/>
            <person name="Luros J.S."/>
            <person name="Maiti R."/>
            <person name="Marziali A."/>
            <person name="Militscher J."/>
            <person name="Miranda M."/>
            <person name="Nguyen M."/>
            <person name="Nierman W.C."/>
            <person name="Osborne B.I."/>
            <person name="Pai G."/>
            <person name="Peterson J."/>
            <person name="Pham P.K."/>
            <person name="Rizzo M."/>
            <person name="Rooney T."/>
            <person name="Rowley D."/>
            <person name="Sakano H."/>
            <person name="Salzberg S.L."/>
            <person name="Schwartz J.R."/>
            <person name="Shinn P."/>
            <person name="Southwick A.M."/>
            <person name="Sun H."/>
            <person name="Tallon L.J."/>
            <person name="Tambunga G."/>
            <person name="Toriumi M.J."/>
            <person name="Town C.D."/>
            <person name="Utterback T."/>
            <person name="Van Aken S."/>
            <person name="Vaysberg M."/>
            <person name="Vysotskaia V.S."/>
            <person name="Walker M."/>
            <person name="Wu D."/>
            <person name="Yu G."/>
            <person name="Fraser C.M."/>
            <person name="Venter J.C."/>
            <person name="Davis R.W."/>
        </authorList>
    </citation>
    <scope>NUCLEOTIDE SEQUENCE [LARGE SCALE GENOMIC DNA]</scope>
    <source>
        <strain>cv. Columbia</strain>
    </source>
</reference>
<reference key="4">
    <citation type="journal article" date="2017" name="Plant J.">
        <title>Araport11: a complete reannotation of the Arabidopsis thaliana reference genome.</title>
        <authorList>
            <person name="Cheng C.Y."/>
            <person name="Krishnakumar V."/>
            <person name="Chan A.P."/>
            <person name="Thibaud-Nissen F."/>
            <person name="Schobel S."/>
            <person name="Town C.D."/>
        </authorList>
    </citation>
    <scope>GENOME REANNOTATION</scope>
    <source>
        <strain>cv. Columbia</strain>
    </source>
</reference>
<reference key="5">
    <citation type="journal article" date="2007" name="Plant Mol. Biol.">
        <title>Yeast two-hybrid map of Arabidopsis TFIID.</title>
        <authorList>
            <person name="Lawit S.J."/>
            <person name="O'Grady K."/>
            <person name="Gurley W.B."/>
            <person name="Czarnecka-Verner E."/>
        </authorList>
    </citation>
    <scope>INTERACTION WITH TAF7; TAF14B; TBP1 AND TBP2</scope>
</reference>
<keyword id="KW-0010">Activator</keyword>
<keyword id="KW-0103">Bromodomain</keyword>
<keyword id="KW-0156">Chromatin regulator</keyword>
<keyword id="KW-0175">Coiled coil</keyword>
<keyword id="KW-0539">Nucleus</keyword>
<keyword id="KW-1185">Reference proteome</keyword>
<keyword id="KW-0804">Transcription</keyword>
<keyword id="KW-0805">Transcription regulation</keyword>
<organism>
    <name type="scientific">Arabidopsis thaliana</name>
    <name type="common">Mouse-ear cress</name>
    <dbReference type="NCBI Taxonomy" id="3702"/>
    <lineage>
        <taxon>Eukaryota</taxon>
        <taxon>Viridiplantae</taxon>
        <taxon>Streptophyta</taxon>
        <taxon>Embryophyta</taxon>
        <taxon>Tracheophyta</taxon>
        <taxon>Spermatophyta</taxon>
        <taxon>Magnoliopsida</taxon>
        <taxon>eudicotyledons</taxon>
        <taxon>Gunneridae</taxon>
        <taxon>Pentapetalae</taxon>
        <taxon>rosids</taxon>
        <taxon>malvids</taxon>
        <taxon>Brassicales</taxon>
        <taxon>Brassicaceae</taxon>
        <taxon>Camelineae</taxon>
        <taxon>Arabidopsis</taxon>
    </lineage>
</organism>